<sequence>MYTPIPANTPAPTAPTSSMTSNSSSASNANTTSSSGINPRNRASGTPSNERARPASGISSFLNTFGIRQNSQTASSSAAPDQRLFGTTPSNSHMSVAMESIDTAPQQQEPRLHHPIQMPLSAQFHVHRNYQLPISISLTAPTTTDHQQSSAHNFEGNNVGNVQESLNQRQPNGTNNTTTSIISMAPAATTRNIVGGADGSTIVNNSQEMYKNLRHLIYAANQPNGTEILHLDLPATSAEESNNMFNVDEVTLKQRKDKHGLFSIRLTPFIDSSSTTNQGLFFEPIIRKAGPGSQLVIGRYTERVRDAISKIPEQYHPVVFKSKVVSRTHGCFKVDSQGNWYIKDVKSSSGTFLNHQRLSPASSLSKDTPLRDGDILQLGMDFRGGTEEIYRCVRMRIELNRSWKLKANSFNKEALQRLQNLQKLTTGIEEEDCSICLCKIKPCQAIFISPCAHSWHFRCVRRLVMLSYPQFVCPNCRSSCDLEASFESSDEEDESDVESEGDQLVDQLSVLMETSKDVDSHP</sequence>
<name>DMA2_YEAST</name>
<feature type="chain" id="PRO_0000056342" description="E3 ubiquitin-protein ligase DMA2">
    <location>
        <begin position="1"/>
        <end position="522"/>
    </location>
</feature>
<feature type="domain" description="FHA" evidence="1">
    <location>
        <begin position="295"/>
        <end position="358"/>
    </location>
</feature>
<feature type="zinc finger region" description="RING-type" evidence="2">
    <location>
        <begin position="433"/>
        <end position="477"/>
    </location>
</feature>
<feature type="region of interest" description="Disordered" evidence="3">
    <location>
        <begin position="1"/>
        <end position="56"/>
    </location>
</feature>
<feature type="region of interest" description="Disordered" evidence="3">
    <location>
        <begin position="69"/>
        <end position="92"/>
    </location>
</feature>
<feature type="compositionally biased region" description="Low complexity" evidence="3">
    <location>
        <begin position="14"/>
        <end position="35"/>
    </location>
</feature>
<feature type="compositionally biased region" description="Polar residues" evidence="3">
    <location>
        <begin position="36"/>
        <end position="49"/>
    </location>
</feature>
<feature type="modified residue" description="Phosphoserine" evidence="11">
    <location>
        <position position="206"/>
    </location>
</feature>
<feature type="cross-link" description="Glycyl lysine isopeptide (Lys-Gly) (interchain with G-Cter in ubiquitin)" evidence="8">
    <location>
        <position position="211"/>
    </location>
</feature>
<feature type="cross-link" description="Glycyl lysine isopeptide (Lys-Gly) (interchain with G-Cter in ubiquitin)" evidence="8">
    <location>
        <position position="256"/>
    </location>
</feature>
<feature type="cross-link" description="Glycyl lysine isopeptide (Lys-Gly) (interchain with G-Cter in ubiquitin)" evidence="8">
    <location>
        <position position="258"/>
    </location>
</feature>
<feature type="cross-link" description="Glycyl lysine isopeptide (Lys-Gly) (interchain with G-Cter in ubiquitin)" evidence="8">
    <location>
        <position position="288"/>
    </location>
</feature>
<feature type="cross-link" description="Glycyl lysine isopeptide (Lys-Gly) (interchain with G-Cter in ubiquitin)" evidence="8">
    <location>
        <position position="310"/>
    </location>
</feature>
<feature type="cross-link" description="Glycyl lysine isopeptide (Lys-Gly) (interchain with G-Cter in ubiquitin)" evidence="8">
    <location>
        <position position="333"/>
    </location>
</feature>
<feature type="cross-link" description="Glycyl lysine isopeptide (Lys-Gly) (interchain with G-Cter in ubiquitin)" evidence="8">
    <location>
        <position position="343"/>
    </location>
</feature>
<feature type="cross-link" description="Glycyl lysine isopeptide (Lys-Gly) (interchain with G-Cter in ubiquitin)" evidence="8">
    <location>
        <position position="346"/>
    </location>
</feature>
<feature type="cross-link" description="Glycyl lysine isopeptide (Lys-Gly) (interchain with G-Cter in ubiquitin)" evidence="8">
    <location>
        <position position="366"/>
    </location>
</feature>
<feature type="cross-link" description="Glycyl lysine isopeptide (Lys-Gly) (interchain with G-Cter in ubiquitin)" evidence="8">
    <location>
        <position position="406"/>
    </location>
</feature>
<feature type="cross-link" description="Glycyl lysine isopeptide (Lys-Gly) (interchain with G-Cter in ubiquitin)" evidence="8">
    <location>
        <position position="412"/>
    </location>
</feature>
<feature type="cross-link" description="Glycyl lysine isopeptide (Lys-Gly) (interchain with G-Cter in ubiquitin)" evidence="8">
    <location>
        <position position="423"/>
    </location>
</feature>
<feature type="sequence variant" description="In strain: YJM 269, YJM 270, YJM 326 and YJM 1129." evidence="9">
    <original>T</original>
    <variation>A</variation>
    <location>
        <position position="13"/>
    </location>
</feature>
<feature type="sequence variant" description="In strain: YJM 269, YJM 270, YJM 326 and YJM 1129." evidence="9">
    <original>R</original>
    <variation>H</variation>
    <location>
        <position position="111"/>
    </location>
</feature>
<feature type="sequence variant" description="In strain: YJM 269, YJM 270, YJM 326 and YJM 1129." evidence="9">
    <original>S</original>
    <variation>L</variation>
    <location>
        <position position="149"/>
    </location>
</feature>
<feature type="sequence variant" description="In strain: YJM 267." evidence="9">
    <original>S</original>
    <variation>T</variation>
    <location>
        <position position="165"/>
    </location>
</feature>
<feature type="sequence variant" description="In strain: YJM 269, YJM 270, YJM 326 and YJM 1129." evidence="9">
    <original>I</original>
    <variation>T</variation>
    <location>
        <position position="202"/>
    </location>
</feature>
<feature type="sequence variant" description="In strain: YJM 267." evidence="9">
    <original>E</original>
    <variation>Q</variation>
    <location>
        <position position="239"/>
    </location>
</feature>
<feature type="sequence variant" description="In strain: SK1, V1-09, YJM 267, YJM 269, YJM 270, YJM 280, YJM 320,YJM 326, YJM 339 and YJM 1129." evidence="9">
    <original>I</original>
    <variation>V</variation>
    <location>
        <position position="428"/>
    </location>
</feature>
<feature type="sequence variant" description="In strain: SK1." evidence="9">
    <location>
        <begin position="511"/>
        <end position="522"/>
    </location>
</feature>
<keyword id="KW-0131">Cell cycle</keyword>
<keyword id="KW-0132">Cell division</keyword>
<keyword id="KW-0963">Cytoplasm</keyword>
<keyword id="KW-1017">Isopeptide bond</keyword>
<keyword id="KW-0479">Metal-binding</keyword>
<keyword id="KW-0498">Mitosis</keyword>
<keyword id="KW-0597">Phosphoprotein</keyword>
<keyword id="KW-1185">Reference proteome</keyword>
<keyword id="KW-0808">Transferase</keyword>
<keyword id="KW-0832">Ubl conjugation</keyword>
<keyword id="KW-0833">Ubl conjugation pathway</keyword>
<keyword id="KW-0862">Zinc</keyword>
<keyword id="KW-0863">Zinc-finger</keyword>
<proteinExistence type="evidence at protein level"/>
<comment type="function">
    <text evidence="6 7 8">E3 ubiquitin-protein ligase which functions in cell cycle retarding in conjunction with the UBC4 and UBC13/MMS2 complex, 2 E2 ubiquitin conjugating enzymes. Involved in nutritional control of the cell cycle. Required for proper spindle positioning, likely regulating septin ring deposition at the bud neck.</text>
</comment>
<comment type="catalytic activity">
    <reaction evidence="8">
        <text>S-ubiquitinyl-[E2 ubiquitin-conjugating enzyme]-L-cysteine + [acceptor protein]-L-lysine = [E2 ubiquitin-conjugating enzyme]-L-cysteine + N(6)-ubiquitinyl-[acceptor protein]-L-lysine.</text>
        <dbReference type="EC" id="2.3.2.27"/>
    </reaction>
</comment>
<comment type="subcellular location">
    <subcellularLocation>
        <location evidence="4">Cytoplasm</location>
    </subcellularLocation>
</comment>
<comment type="PTM">
    <text evidence="8">UBC4-dependent autoubiquitination occurs at Lys-211, Lys-258, Lys-288, Lys-310, Lys-333, Lys-343, Lys-346, Lys-366, Lys-406, Lys-412 and Lys-423. UBC4-dependent autoubiquitination is responsible for DMA2 turnover. UBC13/MMS2-dependent autoubiquitination occurs at Lys-258, Lys-310, Lys-346 and Lys-366. Lys-211, Lys-256, Lys-288, Lys-310, Lys-343, Lys-258, Lys-366 and Lys-412 are also ubiquitinated in trans by DMA1 E3 ligase in association with UBC4.</text>
</comment>
<comment type="miscellaneous">
    <text evidence="5">Present with 1750 molecules/cell in log phase SD medium.</text>
</comment>
<comment type="similarity">
    <text evidence="10">Belongs to the DMA1 family.</text>
</comment>
<evidence type="ECO:0000255" key="1">
    <source>
        <dbReference type="PROSITE-ProRule" id="PRU00086"/>
    </source>
</evidence>
<evidence type="ECO:0000255" key="2">
    <source>
        <dbReference type="PROSITE-ProRule" id="PRU00175"/>
    </source>
</evidence>
<evidence type="ECO:0000256" key="3">
    <source>
        <dbReference type="SAM" id="MobiDB-lite"/>
    </source>
</evidence>
<evidence type="ECO:0000269" key="4">
    <source>
    </source>
</evidence>
<evidence type="ECO:0000269" key="5">
    <source>
    </source>
</evidence>
<evidence type="ECO:0000269" key="6">
    <source>
    </source>
</evidence>
<evidence type="ECO:0000269" key="7">
    <source>
    </source>
</evidence>
<evidence type="ECO:0000269" key="8">
    <source>
    </source>
</evidence>
<evidence type="ECO:0000269" key="9">
    <source>
    </source>
</evidence>
<evidence type="ECO:0000305" key="10"/>
<evidence type="ECO:0007744" key="11">
    <source>
    </source>
</evidence>
<organism>
    <name type="scientific">Saccharomyces cerevisiae (strain ATCC 204508 / S288c)</name>
    <name type="common">Baker's yeast</name>
    <dbReference type="NCBI Taxonomy" id="559292"/>
    <lineage>
        <taxon>Eukaryota</taxon>
        <taxon>Fungi</taxon>
        <taxon>Dikarya</taxon>
        <taxon>Ascomycota</taxon>
        <taxon>Saccharomycotina</taxon>
        <taxon>Saccharomycetes</taxon>
        <taxon>Saccharomycetales</taxon>
        <taxon>Saccharomycetaceae</taxon>
        <taxon>Saccharomyces</taxon>
    </lineage>
</organism>
<gene>
    <name type="primary">DMA2</name>
    <name type="synonym">CHF2</name>
    <name type="ordered locus">YNL116W</name>
    <name type="ORF">N1925</name>
</gene>
<accession>P53924</accession>
<accession>B0KZS8</accession>
<accession>B0KZU6</accession>
<accession>B0KZW4</accession>
<accession>B0L009</accession>
<accession>D6W166</accession>
<accession>Q66GT0</accession>
<dbReference type="EC" id="2.3.2.27" evidence="8"/>
<dbReference type="EMBL" id="EF125216">
    <property type="protein sequence ID" value="ABN58541.1"/>
    <property type="molecule type" value="Genomic_DNA"/>
</dbReference>
<dbReference type="EMBL" id="EF125217">
    <property type="protein sequence ID" value="ABN58550.1"/>
    <property type="molecule type" value="Genomic_DNA"/>
</dbReference>
<dbReference type="EMBL" id="EF125218">
    <property type="protein sequence ID" value="ABN58559.1"/>
    <property type="molecule type" value="Genomic_DNA"/>
</dbReference>
<dbReference type="EMBL" id="EF125219">
    <property type="protein sequence ID" value="ABN58568.1"/>
    <property type="molecule type" value="Genomic_DNA"/>
</dbReference>
<dbReference type="EMBL" id="EF125220">
    <property type="protein sequence ID" value="ABN58576.1"/>
    <property type="molecule type" value="Genomic_DNA"/>
</dbReference>
<dbReference type="EMBL" id="EF125221">
    <property type="protein sequence ID" value="ABN58586.1"/>
    <property type="molecule type" value="Genomic_DNA"/>
</dbReference>
<dbReference type="EMBL" id="EF125222">
    <property type="protein sequence ID" value="ABN58595.1"/>
    <property type="molecule type" value="Genomic_DNA"/>
</dbReference>
<dbReference type="EMBL" id="EF125223">
    <property type="protein sequence ID" value="ABN58604.1"/>
    <property type="molecule type" value="Genomic_DNA"/>
</dbReference>
<dbReference type="EMBL" id="EF125224">
    <property type="protein sequence ID" value="ABN58613.1"/>
    <property type="molecule type" value="Genomic_DNA"/>
</dbReference>
<dbReference type="EMBL" id="EF125225">
    <property type="protein sequence ID" value="ABN58622.1"/>
    <property type="molecule type" value="Genomic_DNA"/>
</dbReference>
<dbReference type="EMBL" id="EF125226">
    <property type="protein sequence ID" value="ABN58631.1"/>
    <property type="molecule type" value="Genomic_DNA"/>
</dbReference>
<dbReference type="EMBL" id="EF125228">
    <property type="protein sequence ID" value="ABN58649.1"/>
    <property type="molecule type" value="Genomic_DNA"/>
</dbReference>
<dbReference type="EMBL" id="Z69382">
    <property type="protein sequence ID" value="CAA93391.1"/>
    <property type="molecule type" value="Genomic_DNA"/>
</dbReference>
<dbReference type="EMBL" id="Z71392">
    <property type="protein sequence ID" value="CAA95996.1"/>
    <property type="molecule type" value="Genomic_DNA"/>
</dbReference>
<dbReference type="EMBL" id="BK005579">
    <property type="protein sequence ID" value="DAA05594.1"/>
    <property type="molecule type" value="Genomic_DNA"/>
</dbReference>
<dbReference type="EMBL" id="BK006947">
    <property type="protein sequence ID" value="DAA10432.1"/>
    <property type="molecule type" value="Genomic_DNA"/>
</dbReference>
<dbReference type="PIR" id="S63057">
    <property type="entry name" value="S63057"/>
</dbReference>
<dbReference type="RefSeq" id="NP_014283.3">
    <property type="nucleotide sequence ID" value="NM_001182954.3"/>
</dbReference>
<dbReference type="SMR" id="P53924"/>
<dbReference type="BioGRID" id="35710">
    <property type="interactions" value="182"/>
</dbReference>
<dbReference type="DIP" id="DIP-1774N"/>
<dbReference type="FunCoup" id="P53924">
    <property type="interactions" value="210"/>
</dbReference>
<dbReference type="IntAct" id="P53924">
    <property type="interactions" value="18"/>
</dbReference>
<dbReference type="MINT" id="P53924"/>
<dbReference type="STRING" id="4932.YNL116W"/>
<dbReference type="GlyGen" id="P53924">
    <property type="glycosylation" value="5 sites, 1 O-linked glycan (3 sites)"/>
</dbReference>
<dbReference type="iPTMnet" id="P53924"/>
<dbReference type="PaxDb" id="4932-YNL116W"/>
<dbReference type="PeptideAtlas" id="P53924"/>
<dbReference type="EnsemblFungi" id="YNL116W_mRNA">
    <property type="protein sequence ID" value="YNL116W"/>
    <property type="gene ID" value="YNL116W"/>
</dbReference>
<dbReference type="GeneID" id="855607"/>
<dbReference type="KEGG" id="sce:YNL116W"/>
<dbReference type="AGR" id="SGD:S000005060"/>
<dbReference type="SGD" id="S000005060">
    <property type="gene designation" value="DMA2"/>
</dbReference>
<dbReference type="VEuPathDB" id="FungiDB:YNL116W"/>
<dbReference type="eggNOG" id="KOG3872">
    <property type="taxonomic scope" value="Eukaryota"/>
</dbReference>
<dbReference type="GeneTree" id="ENSGT00940000176812"/>
<dbReference type="HOGENOM" id="CLU_017542_2_0_1"/>
<dbReference type="InParanoid" id="P53924"/>
<dbReference type="OrthoDB" id="687730at2759"/>
<dbReference type="BioCyc" id="YEAST:G3O-33139-MONOMER"/>
<dbReference type="Reactome" id="R-SCE-5693565">
    <property type="pathway name" value="Recruitment and ATM-mediated phosphorylation of repair and signaling proteins at DNA double strand breaks"/>
</dbReference>
<dbReference type="BioGRID-ORCS" id="855607">
    <property type="hits" value="5 hits in 10 CRISPR screens"/>
</dbReference>
<dbReference type="PRO" id="PR:P53924"/>
<dbReference type="Proteomes" id="UP000002311">
    <property type="component" value="Chromosome XIV"/>
</dbReference>
<dbReference type="RNAct" id="P53924">
    <property type="molecule type" value="protein"/>
</dbReference>
<dbReference type="GO" id="GO:0032153">
    <property type="term" value="C:cell division site"/>
    <property type="evidence" value="ECO:0000318"/>
    <property type="project" value="GO_Central"/>
</dbReference>
<dbReference type="GO" id="GO:0032177">
    <property type="term" value="C:cellular bud neck split septin rings"/>
    <property type="evidence" value="ECO:0000315"/>
    <property type="project" value="SGD"/>
</dbReference>
<dbReference type="GO" id="GO:0005934">
    <property type="term" value="C:cellular bud tip"/>
    <property type="evidence" value="ECO:0000315"/>
    <property type="project" value="SGD"/>
</dbReference>
<dbReference type="GO" id="GO:0005737">
    <property type="term" value="C:cytoplasm"/>
    <property type="evidence" value="ECO:0007005"/>
    <property type="project" value="SGD"/>
</dbReference>
<dbReference type="GO" id="GO:0005829">
    <property type="term" value="C:cytosol"/>
    <property type="evidence" value="ECO:0000318"/>
    <property type="project" value="GO_Central"/>
</dbReference>
<dbReference type="GO" id="GO:0000151">
    <property type="term" value="C:ubiquitin ligase complex"/>
    <property type="evidence" value="ECO:0000318"/>
    <property type="project" value="GO_Central"/>
</dbReference>
<dbReference type="GO" id="GO:0061630">
    <property type="term" value="F:ubiquitin protein ligase activity"/>
    <property type="evidence" value="ECO:0000318"/>
    <property type="project" value="GO_Central"/>
</dbReference>
<dbReference type="GO" id="GO:0004842">
    <property type="term" value="F:ubiquitin-protein transferase activity"/>
    <property type="evidence" value="ECO:0000314"/>
    <property type="project" value="SGD"/>
</dbReference>
<dbReference type="GO" id="GO:0008270">
    <property type="term" value="F:zinc ion binding"/>
    <property type="evidence" value="ECO:0007669"/>
    <property type="project" value="UniProtKB-KW"/>
</dbReference>
<dbReference type="GO" id="GO:0032186">
    <property type="term" value="P:cellular bud neck septin ring organization"/>
    <property type="evidence" value="ECO:0000316"/>
    <property type="project" value="SGD"/>
</dbReference>
<dbReference type="GO" id="GO:0000132">
    <property type="term" value="P:establishment of mitotic spindle orientation"/>
    <property type="evidence" value="ECO:0000316"/>
    <property type="project" value="SGD"/>
</dbReference>
<dbReference type="GO" id="GO:0031578">
    <property type="term" value="P:mitotic spindle orientation checkpoint signaling"/>
    <property type="evidence" value="ECO:0000316"/>
    <property type="project" value="SGD"/>
</dbReference>
<dbReference type="GO" id="GO:0051865">
    <property type="term" value="P:protein autoubiquitination"/>
    <property type="evidence" value="ECO:0000314"/>
    <property type="project" value="SGD"/>
</dbReference>
<dbReference type="GO" id="GO:0097271">
    <property type="term" value="P:protein localization to bud neck"/>
    <property type="evidence" value="ECO:0000316"/>
    <property type="project" value="SGD"/>
</dbReference>
<dbReference type="GO" id="GO:0016567">
    <property type="term" value="P:protein ubiquitination"/>
    <property type="evidence" value="ECO:0000318"/>
    <property type="project" value="GO_Central"/>
</dbReference>
<dbReference type="GO" id="GO:0090337">
    <property type="term" value="P:regulation of formin-nucleated actin cable assembly"/>
    <property type="evidence" value="ECO:0000315"/>
    <property type="project" value="SGD"/>
</dbReference>
<dbReference type="GO" id="GO:0000921">
    <property type="term" value="P:septin ring assembly"/>
    <property type="evidence" value="ECO:0000316"/>
    <property type="project" value="SGD"/>
</dbReference>
<dbReference type="GO" id="GO:0006511">
    <property type="term" value="P:ubiquitin-dependent protein catabolic process"/>
    <property type="evidence" value="ECO:0000316"/>
    <property type="project" value="SGD"/>
</dbReference>
<dbReference type="CDD" id="cd22692">
    <property type="entry name" value="FHA_DMA-like"/>
    <property type="match status" value="1"/>
</dbReference>
<dbReference type="CDD" id="cd16458">
    <property type="entry name" value="RING-H2_Dmap-like"/>
    <property type="match status" value="1"/>
</dbReference>
<dbReference type="FunFam" id="3.30.40.10:FF:000426">
    <property type="entry name" value="DMA1p Ubiquitin-protein ligase (E3)"/>
    <property type="match status" value="1"/>
</dbReference>
<dbReference type="FunFam" id="2.60.200.20:FF:000030">
    <property type="entry name" value="FHA domain-containing protein"/>
    <property type="match status" value="1"/>
</dbReference>
<dbReference type="Gene3D" id="2.60.200.20">
    <property type="match status" value="1"/>
</dbReference>
<dbReference type="Gene3D" id="3.30.40.10">
    <property type="entry name" value="Zinc/RING finger domain, C3HC4 (zinc finger)"/>
    <property type="match status" value="1"/>
</dbReference>
<dbReference type="InterPro" id="IPR042823">
    <property type="entry name" value="Dma1/Dma2_RING-H2"/>
</dbReference>
<dbReference type="InterPro" id="IPR000253">
    <property type="entry name" value="FHA_dom"/>
</dbReference>
<dbReference type="InterPro" id="IPR008984">
    <property type="entry name" value="SMAD_FHA_dom_sf"/>
</dbReference>
<dbReference type="InterPro" id="IPR001841">
    <property type="entry name" value="Znf_RING"/>
</dbReference>
<dbReference type="InterPro" id="IPR013083">
    <property type="entry name" value="Znf_RING/FYVE/PHD"/>
</dbReference>
<dbReference type="PANTHER" id="PTHR15067:SF7">
    <property type="entry name" value="E3 UBIQUITIN-PROTEIN LIGASE DMA1-RELATED"/>
    <property type="match status" value="1"/>
</dbReference>
<dbReference type="PANTHER" id="PTHR15067">
    <property type="entry name" value="E3 UBIQUITIN-PROTEIN LIGASE RNF8"/>
    <property type="match status" value="1"/>
</dbReference>
<dbReference type="Pfam" id="PF00498">
    <property type="entry name" value="FHA"/>
    <property type="match status" value="1"/>
</dbReference>
<dbReference type="Pfam" id="PF17123">
    <property type="entry name" value="zf-RING_11"/>
    <property type="match status" value="1"/>
</dbReference>
<dbReference type="SMART" id="SM00240">
    <property type="entry name" value="FHA"/>
    <property type="match status" value="1"/>
</dbReference>
<dbReference type="SUPFAM" id="SSF57850">
    <property type="entry name" value="RING/U-box"/>
    <property type="match status" value="1"/>
</dbReference>
<dbReference type="SUPFAM" id="SSF49879">
    <property type="entry name" value="SMAD/FHA domain"/>
    <property type="match status" value="1"/>
</dbReference>
<dbReference type="PROSITE" id="PS50006">
    <property type="entry name" value="FHA_DOMAIN"/>
    <property type="match status" value="1"/>
</dbReference>
<dbReference type="PROSITE" id="PS50089">
    <property type="entry name" value="ZF_RING_2"/>
    <property type="match status" value="1"/>
</dbReference>
<protein>
    <recommendedName>
        <fullName>E3 ubiquitin-protein ligase DMA2</fullName>
        <ecNumber evidence="8">2.3.2.27</ecNumber>
    </recommendedName>
    <alternativeName>
        <fullName>Checkpoint forkhead associated with RING domains-containing protein 1</fullName>
    </alternativeName>
    <alternativeName>
        <fullName>Defective in mitotic arrest protein 2</fullName>
    </alternativeName>
    <alternativeName>
        <fullName evidence="10">RING-type E3 ubiquitin transferase DMA2</fullName>
    </alternativeName>
</protein>
<reference key="1">
    <citation type="journal article" date="2008" name="Genetics">
        <title>Sequential elimination of major-effect contributors identifies additional quantitative trait loci conditioning high-temperature growth in yeast.</title>
        <authorList>
            <person name="Sinha H."/>
            <person name="David L."/>
            <person name="Pascon R.C."/>
            <person name="Clauder-Muenster S."/>
            <person name="Krishnakumar S."/>
            <person name="Nguyen M."/>
            <person name="Shi G."/>
            <person name="Dean J."/>
            <person name="Davis R.W."/>
            <person name="Oefner P.J."/>
            <person name="McCusker J.H."/>
            <person name="Steinmetz L.M."/>
        </authorList>
    </citation>
    <scope>NUCLEOTIDE SEQUENCE [GENOMIC DNA]</scope>
    <scope>VARIANTS ALA-13; HIS-111; LEU-149; THR-165; THR-202; GLN-239; VAL-428 AND 511-LEU--PRO-522 DEL</scope>
    <source>
        <strain>ATCC 200060 / W303</strain>
        <strain>S103</strain>
        <strain>SK1</strain>
        <strain>V1-09</strain>
        <strain>YJM 1129</strain>
        <strain>YJM 230</strain>
        <strain>YJM 269</strain>
        <strain>YJM 270</strain>
        <strain>YJM 320</strain>
        <strain>YJM 326</strain>
        <strain>YJM 339</strain>
        <strain>YJM 627</strain>
    </source>
</reference>
<reference key="2">
    <citation type="journal article" date="1997" name="Yeast">
        <title>The DNA sequence of cosmid 14-13b from chromosome XIV of Saccharomyces cerevisiae reveals an unusually high number of overlapping open reading frames.</title>
        <authorList>
            <person name="de Antoni A."/>
            <person name="D'Angelo M."/>
            <person name="Dal Pero F."/>
            <person name="Sartorello F."/>
            <person name="Pandolfo D."/>
            <person name="Pallavicini A."/>
            <person name="Lanfranchi G."/>
            <person name="Valle G."/>
        </authorList>
    </citation>
    <scope>NUCLEOTIDE SEQUENCE [GENOMIC DNA]</scope>
</reference>
<reference key="3">
    <citation type="journal article" date="1997" name="Nature">
        <title>The nucleotide sequence of Saccharomyces cerevisiae chromosome XIV and its evolutionary implications.</title>
        <authorList>
            <person name="Philippsen P."/>
            <person name="Kleine K."/>
            <person name="Poehlmann R."/>
            <person name="Duesterhoeft A."/>
            <person name="Hamberg K."/>
            <person name="Hegemann J.H."/>
            <person name="Obermaier B."/>
            <person name="Urrestarazu L.A."/>
            <person name="Aert R."/>
            <person name="Albermann K."/>
            <person name="Altmann R."/>
            <person name="Andre B."/>
            <person name="Baladron V."/>
            <person name="Ballesta J.P.G."/>
            <person name="Becam A.-M."/>
            <person name="Beinhauer J.D."/>
            <person name="Boskovic J."/>
            <person name="Buitrago M.J."/>
            <person name="Bussereau F."/>
            <person name="Coster F."/>
            <person name="Crouzet M."/>
            <person name="D'Angelo M."/>
            <person name="Dal Pero F."/>
            <person name="De Antoni A."/>
            <person name="del Rey F."/>
            <person name="Doignon F."/>
            <person name="Domdey H."/>
            <person name="Dubois E."/>
            <person name="Fiedler T.A."/>
            <person name="Fleig U."/>
            <person name="Floeth M."/>
            <person name="Fritz C."/>
            <person name="Gaillardin C."/>
            <person name="Garcia-Cantalejo J.M."/>
            <person name="Glansdorff N."/>
            <person name="Goffeau A."/>
            <person name="Gueldener U."/>
            <person name="Herbert C.J."/>
            <person name="Heumann K."/>
            <person name="Heuss-Neitzel D."/>
            <person name="Hilbert H."/>
            <person name="Hinni K."/>
            <person name="Iraqui Houssaini I."/>
            <person name="Jacquet M."/>
            <person name="Jimenez A."/>
            <person name="Jonniaux J.-L."/>
            <person name="Karpfinger-Hartl L."/>
            <person name="Lanfranchi G."/>
            <person name="Lepingle A."/>
            <person name="Levesque H."/>
            <person name="Lyck R."/>
            <person name="Maftahi M."/>
            <person name="Mallet L."/>
            <person name="Maurer C.T.C."/>
            <person name="Messenguy F."/>
            <person name="Mewes H.-W."/>
            <person name="Moestl D."/>
            <person name="Nasr F."/>
            <person name="Nicaud J.-M."/>
            <person name="Niedenthal R.K."/>
            <person name="Pandolfo D."/>
            <person name="Pierard A."/>
            <person name="Piravandi E."/>
            <person name="Planta R.J."/>
            <person name="Pohl T.M."/>
            <person name="Purnelle B."/>
            <person name="Rebischung C."/>
            <person name="Remacha M.A."/>
            <person name="Revuelta J.L."/>
            <person name="Rinke M."/>
            <person name="Saiz J.E."/>
            <person name="Sartorello F."/>
            <person name="Scherens B."/>
            <person name="Sen-Gupta M."/>
            <person name="Soler-Mira A."/>
            <person name="Urbanus J.H.M."/>
            <person name="Valle G."/>
            <person name="Van Dyck L."/>
            <person name="Verhasselt P."/>
            <person name="Vierendeels F."/>
            <person name="Vissers S."/>
            <person name="Voet M."/>
            <person name="Volckaert G."/>
            <person name="Wach A."/>
            <person name="Wambutt R."/>
            <person name="Wedler H."/>
            <person name="Zollner A."/>
            <person name="Hani J."/>
        </authorList>
    </citation>
    <scope>NUCLEOTIDE SEQUENCE [LARGE SCALE GENOMIC DNA]</scope>
    <source>
        <strain>ATCC 204508 / S288c</strain>
    </source>
</reference>
<reference key="4">
    <citation type="journal article" date="2014" name="G3 (Bethesda)">
        <title>The reference genome sequence of Saccharomyces cerevisiae: Then and now.</title>
        <authorList>
            <person name="Engel S.R."/>
            <person name="Dietrich F.S."/>
            <person name="Fisk D.G."/>
            <person name="Binkley G."/>
            <person name="Balakrishnan R."/>
            <person name="Costanzo M.C."/>
            <person name="Dwight S.S."/>
            <person name="Hitz B.C."/>
            <person name="Karra K."/>
            <person name="Nash R.S."/>
            <person name="Weng S."/>
            <person name="Wong E.D."/>
            <person name="Lloyd P."/>
            <person name="Skrzypek M.S."/>
            <person name="Miyasato S.R."/>
            <person name="Simison M."/>
            <person name="Cherry J.M."/>
        </authorList>
    </citation>
    <scope>GENOME REANNOTATION</scope>
    <source>
        <strain>ATCC 204508 / S288c</strain>
    </source>
</reference>
<reference key="5">
    <citation type="journal article" date="2003" name="Nature">
        <title>Global analysis of protein localization in budding yeast.</title>
        <authorList>
            <person name="Huh W.-K."/>
            <person name="Falvo J.V."/>
            <person name="Gerke L.C."/>
            <person name="Carroll A.S."/>
            <person name="Howson R.W."/>
            <person name="Weissman J.S."/>
            <person name="O'Shea E.K."/>
        </authorList>
    </citation>
    <scope>SUBCELLULAR LOCATION [LARGE SCALE ANALYSIS]</scope>
</reference>
<reference key="6">
    <citation type="journal article" date="2003" name="Nature">
        <title>Global analysis of protein expression in yeast.</title>
        <authorList>
            <person name="Ghaemmaghami S."/>
            <person name="Huh W.-K."/>
            <person name="Bower K."/>
            <person name="Howson R.W."/>
            <person name="Belle A."/>
            <person name="Dephoure N."/>
            <person name="O'Shea E.K."/>
            <person name="Weissman J.S."/>
        </authorList>
    </citation>
    <scope>LEVEL OF PROTEIN EXPRESSION [LARGE SCALE ANALYSIS]</scope>
</reference>
<reference key="7">
    <citation type="journal article" date="2004" name="J. Biol. Chem.">
        <title>Cdc123 and checkpoint forkhead associated with RING proteins control the cell cycle by controlling eIF2gamma abundance.</title>
        <authorList>
            <person name="Bieganowski P."/>
            <person name="Shilinski K."/>
            <person name="Tsichlis P.N."/>
            <person name="Brenner C."/>
        </authorList>
    </citation>
    <scope>FUNCTION</scope>
    <scope>INTERACTION WITH CDC123</scope>
</reference>
<reference key="8">
    <citation type="journal article" date="2004" name="Mol. Biol. Cell">
        <title>Functional characterization of Dma1 and Dma2, the budding yeast homologues of Schizosaccharomyces pombe Dma1 and human Chfr.</title>
        <authorList>
            <person name="Fraschini R."/>
            <person name="Bilotta D."/>
            <person name="Lucchini G."/>
            <person name="Piatti S."/>
        </authorList>
    </citation>
    <scope>FUNCTION</scope>
</reference>
<reference key="9">
    <citation type="journal article" date="2008" name="Cell Cycle">
        <title>Yeast Chfr homologs retard cell cycle at G1 and G2/M via Ubc4 and Ubc13/Mms2-dependent ubiquitination.</title>
        <authorList>
            <person name="Loring G.L."/>
            <person name="Christensen K.C."/>
            <person name="Gerber S.A."/>
            <person name="Brenner C."/>
        </authorList>
    </citation>
    <scope>FUNCTION</scope>
    <scope>CATALYTIC ACTIVITY</scope>
    <scope>IDENTIFICATION BY MASS SPECTROMETRY</scope>
    <scope>UBIQUITINATION AT LYS-211; LYS-256; LYS-258; LYS-288; LYS-310; LYS-333; LYS-343; LYS-346; LYS-366; LYS-406; LYS-412 AND LYS-423</scope>
</reference>
<reference key="10">
    <citation type="journal article" date="2008" name="Mol. Cell. Proteomics">
        <title>A multidimensional chromatography technology for in-depth phosphoproteome analysis.</title>
        <authorList>
            <person name="Albuquerque C.P."/>
            <person name="Smolka M.B."/>
            <person name="Payne S.H."/>
            <person name="Bafna V."/>
            <person name="Eng J."/>
            <person name="Zhou H."/>
        </authorList>
    </citation>
    <scope>PHOSPHORYLATION [LARGE SCALE ANALYSIS] AT SER-206</scope>
    <scope>IDENTIFICATION BY MASS SPECTROMETRY [LARGE SCALE ANALYSIS]</scope>
</reference>